<protein>
    <recommendedName>
        <fullName>Homeobox protein goosecoid</fullName>
    </recommendedName>
</protein>
<name>GSC_CHICK</name>
<sequence>MPASMFSIDNILAARPRCKDSVLLPPSAPVVFPSLHGDSLYGAASDYGGFYSRAVAPGSALPAVGRSRLGYNNYYYGQLHVATSPVGPSCCGAVPPLGAQQCSCVPPAGYEGAGSVLMSPVPHQMLPYMNVGTLSRTELQLLNQLHCRRKRRHRTIFTDEQLEALENLFQETKYPDVGTREQLARKVHLREEKVEVWFKNRRAKWRRQKRSSSEESENAQKWNKASKTSPEKRQEDGKSDLDSDS</sequence>
<evidence type="ECO:0000255" key="1">
    <source>
        <dbReference type="PROSITE-ProRule" id="PRU00108"/>
    </source>
</evidence>
<evidence type="ECO:0000256" key="2">
    <source>
        <dbReference type="SAM" id="MobiDB-lite"/>
    </source>
</evidence>
<evidence type="ECO:0000305" key="3"/>
<proteinExistence type="evidence at transcript level"/>
<dbReference type="EMBL" id="X70471">
    <property type="protein sequence ID" value="CAA49897.1"/>
    <property type="molecule type" value="mRNA"/>
</dbReference>
<dbReference type="PIR" id="A47539">
    <property type="entry name" value="A47539"/>
</dbReference>
<dbReference type="RefSeq" id="NP_990662.1">
    <property type="nucleotide sequence ID" value="NM_205331.1"/>
</dbReference>
<dbReference type="SMR" id="P53545"/>
<dbReference type="FunCoup" id="P53545">
    <property type="interactions" value="164"/>
</dbReference>
<dbReference type="STRING" id="9031.ENSGALP00000058720"/>
<dbReference type="PaxDb" id="9031-ENSGALP00000017857"/>
<dbReference type="GeneID" id="396273"/>
<dbReference type="KEGG" id="gga:396273"/>
<dbReference type="CTD" id="145258"/>
<dbReference type="VEuPathDB" id="HostDB:geneid_396273"/>
<dbReference type="eggNOG" id="KOG0490">
    <property type="taxonomic scope" value="Eukaryota"/>
</dbReference>
<dbReference type="InParanoid" id="P53545"/>
<dbReference type="OrthoDB" id="6159439at2759"/>
<dbReference type="PhylomeDB" id="P53545"/>
<dbReference type="PRO" id="PR:P53545"/>
<dbReference type="Proteomes" id="UP000000539">
    <property type="component" value="Unassembled WGS sequence"/>
</dbReference>
<dbReference type="GO" id="GO:0005634">
    <property type="term" value="C:nucleus"/>
    <property type="evidence" value="ECO:0000318"/>
    <property type="project" value="GO_Central"/>
</dbReference>
<dbReference type="GO" id="GO:0000981">
    <property type="term" value="F:DNA-binding transcription factor activity, RNA polymerase II-specific"/>
    <property type="evidence" value="ECO:0000318"/>
    <property type="project" value="GO_Central"/>
</dbReference>
<dbReference type="GO" id="GO:0000978">
    <property type="term" value="F:RNA polymerase II cis-regulatory region sequence-specific DNA binding"/>
    <property type="evidence" value="ECO:0000318"/>
    <property type="project" value="GO_Central"/>
</dbReference>
<dbReference type="GO" id="GO:0006357">
    <property type="term" value="P:regulation of transcription by RNA polymerase II"/>
    <property type="evidence" value="ECO:0000318"/>
    <property type="project" value="GO_Central"/>
</dbReference>
<dbReference type="CDD" id="cd00086">
    <property type="entry name" value="homeodomain"/>
    <property type="match status" value="1"/>
</dbReference>
<dbReference type="FunFam" id="1.10.10.60:FF:000210">
    <property type="entry name" value="homeobox protein goosecoid"/>
    <property type="match status" value="1"/>
</dbReference>
<dbReference type="Gene3D" id="1.10.10.60">
    <property type="entry name" value="Homeodomain-like"/>
    <property type="match status" value="1"/>
</dbReference>
<dbReference type="InterPro" id="IPR051440">
    <property type="entry name" value="Goosecoid-like_HB"/>
</dbReference>
<dbReference type="InterPro" id="IPR001356">
    <property type="entry name" value="HD"/>
</dbReference>
<dbReference type="InterPro" id="IPR017970">
    <property type="entry name" value="Homeobox_CS"/>
</dbReference>
<dbReference type="InterPro" id="IPR009057">
    <property type="entry name" value="Homeodomain-like_sf"/>
</dbReference>
<dbReference type="PANTHER" id="PTHR46643:SF2">
    <property type="entry name" value="HOMEOBOX PROTEIN GOOSECOID"/>
    <property type="match status" value="1"/>
</dbReference>
<dbReference type="PANTHER" id="PTHR46643">
    <property type="entry name" value="HOMEOBOX PROTEIN GOOSECOID-RELATED"/>
    <property type="match status" value="1"/>
</dbReference>
<dbReference type="Pfam" id="PF00046">
    <property type="entry name" value="Homeodomain"/>
    <property type="match status" value="1"/>
</dbReference>
<dbReference type="SMART" id="SM00389">
    <property type="entry name" value="HOX"/>
    <property type="match status" value="1"/>
</dbReference>
<dbReference type="SUPFAM" id="SSF46689">
    <property type="entry name" value="Homeodomain-like"/>
    <property type="match status" value="1"/>
</dbReference>
<dbReference type="PROSITE" id="PS00027">
    <property type="entry name" value="HOMEOBOX_1"/>
    <property type="match status" value="1"/>
</dbReference>
<dbReference type="PROSITE" id="PS50071">
    <property type="entry name" value="HOMEOBOX_2"/>
    <property type="match status" value="1"/>
</dbReference>
<organism>
    <name type="scientific">Gallus gallus</name>
    <name type="common">Chicken</name>
    <dbReference type="NCBI Taxonomy" id="9031"/>
    <lineage>
        <taxon>Eukaryota</taxon>
        <taxon>Metazoa</taxon>
        <taxon>Chordata</taxon>
        <taxon>Craniata</taxon>
        <taxon>Vertebrata</taxon>
        <taxon>Euteleostomi</taxon>
        <taxon>Archelosauria</taxon>
        <taxon>Archosauria</taxon>
        <taxon>Dinosauria</taxon>
        <taxon>Saurischia</taxon>
        <taxon>Theropoda</taxon>
        <taxon>Coelurosauria</taxon>
        <taxon>Aves</taxon>
        <taxon>Neognathae</taxon>
        <taxon>Galloanserae</taxon>
        <taxon>Galliformes</taxon>
        <taxon>Phasianidae</taxon>
        <taxon>Phasianinae</taxon>
        <taxon>Gallus</taxon>
    </lineage>
</organism>
<feature type="chain" id="PRO_0000048888" description="Homeobox protein goosecoid">
    <location>
        <begin position="1"/>
        <end position="245"/>
    </location>
</feature>
<feature type="DNA-binding region" description="Homeobox" evidence="1">
    <location>
        <begin position="150"/>
        <end position="209"/>
    </location>
</feature>
<feature type="region of interest" description="Disordered" evidence="2">
    <location>
        <begin position="203"/>
        <end position="245"/>
    </location>
</feature>
<feature type="compositionally biased region" description="Polar residues" evidence="2">
    <location>
        <begin position="219"/>
        <end position="228"/>
    </location>
</feature>
<feature type="compositionally biased region" description="Basic and acidic residues" evidence="2">
    <location>
        <begin position="229"/>
        <end position="245"/>
    </location>
</feature>
<reference key="1">
    <citation type="journal article" date="1993" name="Cell">
        <title>The homeobox gene goosecoid and the origin of organizer cells in the early chick blastoderm.</title>
        <authorList>
            <person name="Izpisua-Belmonte J.-C."/>
            <person name="De Robertis E.M."/>
            <person name="Storey K.G."/>
            <person name="Stern C.D."/>
        </authorList>
    </citation>
    <scope>NUCLEOTIDE SEQUENCE [MRNA]</scope>
    <source>
        <tissue>Limb bud</tissue>
    </source>
</reference>
<accession>P53545</accession>
<gene>
    <name type="primary">GSC</name>
</gene>
<keyword id="KW-0217">Developmental protein</keyword>
<keyword id="KW-0238">DNA-binding</keyword>
<keyword id="KW-0371">Homeobox</keyword>
<keyword id="KW-0539">Nucleus</keyword>
<keyword id="KW-1185">Reference proteome</keyword>
<comment type="function">
    <text>Involved in the development of the organizer region in the gastrula (Hensen node in chicken).</text>
</comment>
<comment type="subcellular location">
    <subcellularLocation>
        <location>Nucleus</location>
    </subcellularLocation>
</comment>
<comment type="developmental stage">
    <text>Is first expressed in the Koller's sickle (a crescent shaped thickening located at the edge of the posterior marginal zone), and then it is detected in Hensen node which is considered as the chick organizer. Later expression is seen in the anterior most region of the head process (cells that contribute to the prechordal plate at the midline of the pharyngeal mesendoderm).</text>
</comment>
<comment type="similarity">
    <text evidence="3">Belongs to the paired homeobox family. Bicoid subfamily.</text>
</comment>